<gene>
    <name type="primary">Amyrel</name>
</gene>
<keyword id="KW-0106">Calcium</keyword>
<keyword id="KW-0119">Carbohydrate metabolism</keyword>
<keyword id="KW-0868">Chloride</keyword>
<keyword id="KW-1015">Disulfide bond</keyword>
<keyword id="KW-0326">Glycosidase</keyword>
<keyword id="KW-0378">Hydrolase</keyword>
<keyword id="KW-0479">Metal-binding</keyword>
<keyword id="KW-0873">Pyrrolidone carboxylic acid</keyword>
<keyword id="KW-0964">Secreted</keyword>
<keyword id="KW-0732">Signal</keyword>
<dbReference type="EC" id="3.2.1.1" evidence="2"/>
<dbReference type="EMBL" id="AF039561">
    <property type="protein sequence ID" value="AAC39096.2"/>
    <property type="molecule type" value="Genomic_DNA"/>
</dbReference>
<dbReference type="EMBL" id="AF280874">
    <property type="protein sequence ID" value="AAG60601.1"/>
    <property type="molecule type" value="Genomic_DNA"/>
</dbReference>
<dbReference type="EMBL" id="AF280875">
    <property type="protein sequence ID" value="AAG60602.1"/>
    <property type="molecule type" value="Genomic_DNA"/>
</dbReference>
<dbReference type="EMBL" id="AF280876">
    <property type="protein sequence ID" value="AAG60603.1"/>
    <property type="molecule type" value="Genomic_DNA"/>
</dbReference>
<dbReference type="EMBL" id="AF280877">
    <property type="protein sequence ID" value="AAG60604.1"/>
    <property type="molecule type" value="Genomic_DNA"/>
</dbReference>
<dbReference type="EMBL" id="AF280878">
    <property type="protein sequence ID" value="AAG60605.1"/>
    <property type="molecule type" value="Genomic_DNA"/>
</dbReference>
<dbReference type="SMR" id="O76264"/>
<dbReference type="CAZy" id="GH13">
    <property type="family name" value="Glycoside Hydrolase Family 13"/>
</dbReference>
<dbReference type="eggNOG" id="KOG2212">
    <property type="taxonomic scope" value="Eukaryota"/>
</dbReference>
<dbReference type="OrthoDB" id="550577at2759"/>
<dbReference type="GO" id="GO:0005576">
    <property type="term" value="C:extracellular region"/>
    <property type="evidence" value="ECO:0007669"/>
    <property type="project" value="UniProtKB-SubCell"/>
</dbReference>
<dbReference type="GO" id="GO:0004134">
    <property type="term" value="F:4-alpha-glucanotransferase activity"/>
    <property type="evidence" value="ECO:0007669"/>
    <property type="project" value="EnsemblMetazoa"/>
</dbReference>
<dbReference type="GO" id="GO:0004556">
    <property type="term" value="F:alpha-amylase activity"/>
    <property type="evidence" value="ECO:0007669"/>
    <property type="project" value="UniProtKB-EC"/>
</dbReference>
<dbReference type="GO" id="GO:0046872">
    <property type="term" value="F:metal ion binding"/>
    <property type="evidence" value="ECO:0007669"/>
    <property type="project" value="UniProtKB-KW"/>
</dbReference>
<dbReference type="GO" id="GO:0005975">
    <property type="term" value="P:carbohydrate metabolic process"/>
    <property type="evidence" value="ECO:0007669"/>
    <property type="project" value="InterPro"/>
</dbReference>
<dbReference type="CDD" id="cd11317">
    <property type="entry name" value="AmyAc_bac_euk_AmyA"/>
    <property type="match status" value="1"/>
</dbReference>
<dbReference type="FunFam" id="3.20.20.80:FF:000119">
    <property type="entry name" value="Alpha-amylase-related protein"/>
    <property type="match status" value="1"/>
</dbReference>
<dbReference type="FunFam" id="2.60.40.1180:FF:000020">
    <property type="entry name" value="Pancreatic alpha-amylase"/>
    <property type="match status" value="1"/>
</dbReference>
<dbReference type="Gene3D" id="3.20.20.80">
    <property type="entry name" value="Glycosidases"/>
    <property type="match status" value="1"/>
</dbReference>
<dbReference type="Gene3D" id="2.60.40.1180">
    <property type="entry name" value="Golgi alpha-mannosidase II"/>
    <property type="match status" value="1"/>
</dbReference>
<dbReference type="InterPro" id="IPR006048">
    <property type="entry name" value="A-amylase/branching_C"/>
</dbReference>
<dbReference type="InterPro" id="IPR031319">
    <property type="entry name" value="A-amylase_C"/>
</dbReference>
<dbReference type="InterPro" id="IPR006046">
    <property type="entry name" value="Alpha_amylase"/>
</dbReference>
<dbReference type="InterPro" id="IPR006047">
    <property type="entry name" value="Glyco_hydro_13_cat_dom"/>
</dbReference>
<dbReference type="InterPro" id="IPR013780">
    <property type="entry name" value="Glyco_hydro_b"/>
</dbReference>
<dbReference type="InterPro" id="IPR017853">
    <property type="entry name" value="Glycoside_hydrolase_SF"/>
</dbReference>
<dbReference type="PANTHER" id="PTHR43447">
    <property type="entry name" value="ALPHA-AMYLASE"/>
    <property type="match status" value="1"/>
</dbReference>
<dbReference type="Pfam" id="PF00128">
    <property type="entry name" value="Alpha-amylase"/>
    <property type="match status" value="1"/>
</dbReference>
<dbReference type="Pfam" id="PF02806">
    <property type="entry name" value="Alpha-amylase_C"/>
    <property type="match status" value="1"/>
</dbReference>
<dbReference type="PRINTS" id="PR00110">
    <property type="entry name" value="ALPHAAMYLASE"/>
</dbReference>
<dbReference type="SMART" id="SM00642">
    <property type="entry name" value="Aamy"/>
    <property type="match status" value="1"/>
</dbReference>
<dbReference type="SMART" id="SM00632">
    <property type="entry name" value="Aamy_C"/>
    <property type="match status" value="1"/>
</dbReference>
<dbReference type="SUPFAM" id="SSF51445">
    <property type="entry name" value="(Trans)glycosidases"/>
    <property type="match status" value="1"/>
</dbReference>
<dbReference type="SUPFAM" id="SSF51011">
    <property type="entry name" value="Glycosyl hydrolase domain"/>
    <property type="match status" value="1"/>
</dbReference>
<name>AMYR_DROYA</name>
<comment type="catalytic activity">
    <reaction evidence="2">
        <text>Endohydrolysis of (1-&gt;4)-alpha-D-glucosidic linkages in polysaccharides containing three or more (1-&gt;4)-alpha-linked D-glucose units.</text>
        <dbReference type="EC" id="3.2.1.1"/>
    </reaction>
</comment>
<comment type="cofactor">
    <cofactor evidence="3">
        <name>Ca(2+)</name>
        <dbReference type="ChEBI" id="CHEBI:29108"/>
    </cofactor>
    <text evidence="3">Binds 1 Ca(2+) ion per subunit.</text>
</comment>
<comment type="cofactor">
    <cofactor evidence="3">
        <name>chloride</name>
        <dbReference type="ChEBI" id="CHEBI:17996"/>
    </cofactor>
    <text evidence="3">Binds 1 Cl(-) ion per subunit.</text>
</comment>
<comment type="subunit">
    <text evidence="1">Monomer.</text>
</comment>
<comment type="subcellular location">
    <subcellularLocation>
        <location evidence="5">Secreted</location>
    </subcellularLocation>
</comment>
<comment type="similarity">
    <text evidence="5">Belongs to the glycosyl hydrolase 13 family.</text>
</comment>
<proteinExistence type="inferred from homology"/>
<evidence type="ECO:0000250" key="1"/>
<evidence type="ECO:0000250" key="2">
    <source>
        <dbReference type="UniProtKB" id="P04746"/>
    </source>
</evidence>
<evidence type="ECO:0000250" key="3">
    <source>
        <dbReference type="UniProtKB" id="P56634"/>
    </source>
</evidence>
<evidence type="ECO:0000255" key="4"/>
<evidence type="ECO:0000305" key="5"/>
<sequence>MFKLALTLTLCLAGSLSLAQHNPHWWGNRNTIVHLFEWKWSDIAQECENFLGPRGFAGVQVSPVNENIISAGRPWWERYQPISYKLTTRSGNEEEFGDMVRRCNDVGVRIYVDVLLNHMSGDFDGVAVGTAGTEAEPGKKSFPGVPYSAQDFHPTCEITDWNDRFQVQQCELVGLKDLDQSSDWVRSKPIEFLDHLIELGVAGFRVDAAKHMASEDLEYIYSSLSNLNIDHGFPHNARPFIFQEVIDHGHETVSRDEYKDLGAVTEFRFSEEIGNAFRGNNALKWLQSWGTGWGFLPSGQALTFVDNHDNQRDAGAVLNYKSPKQYKMATAFHLAYPYGISRVMSSFAFDDHDTPPPQDAQERIISPEFDEDGACVNGWICEHRWRQIYAMVGFKNAVRDTEITGWWDNGDNQISFCRGNKGFLAINNNLYDLSQDLNTCLPQGTYCDVISGSLIDGSCTGKSVTVNEHGYGYIHIGSDDFDGVLALHVDAKV</sequence>
<feature type="signal peptide" evidence="1">
    <location>
        <begin position="1"/>
        <end position="19"/>
    </location>
</feature>
<feature type="chain" id="PRO_0000001394" description="Alpha-amylase-related protein">
    <location>
        <begin position="20"/>
        <end position="493"/>
    </location>
</feature>
<feature type="active site" description="Nucleophile" evidence="2">
    <location>
        <position position="207"/>
    </location>
</feature>
<feature type="active site" description="Proton donor" evidence="2">
    <location>
        <position position="244"/>
    </location>
</feature>
<feature type="binding site" evidence="3">
    <location>
        <position position="117"/>
    </location>
    <ligand>
        <name>Ca(2+)</name>
        <dbReference type="ChEBI" id="CHEBI:29108"/>
    </ligand>
</feature>
<feature type="binding site" evidence="3">
    <location>
        <position position="168"/>
    </location>
    <ligand>
        <name>Ca(2+)</name>
        <dbReference type="ChEBI" id="CHEBI:29108"/>
    </ligand>
</feature>
<feature type="binding site" evidence="3">
    <location>
        <position position="177"/>
    </location>
    <ligand>
        <name>Ca(2+)</name>
        <dbReference type="ChEBI" id="CHEBI:29108"/>
    </ligand>
</feature>
<feature type="binding site" evidence="3">
    <location>
        <position position="205"/>
    </location>
    <ligand>
        <name>chloride</name>
        <dbReference type="ChEBI" id="CHEBI:17996"/>
    </ligand>
</feature>
<feature type="binding site" evidence="3">
    <location>
        <position position="211"/>
    </location>
    <ligand>
        <name>Ca(2+)</name>
        <dbReference type="ChEBI" id="CHEBI:29108"/>
    </ligand>
</feature>
<feature type="binding site" evidence="3">
    <location>
        <position position="307"/>
    </location>
    <ligand>
        <name>chloride</name>
        <dbReference type="ChEBI" id="CHEBI:17996"/>
    </ligand>
</feature>
<feature type="binding site" evidence="3">
    <location>
        <position position="342"/>
    </location>
    <ligand>
        <name>chloride</name>
        <dbReference type="ChEBI" id="CHEBI:17996"/>
    </ligand>
</feature>
<feature type="site" description="Transition state stabilizer" evidence="2">
    <location>
        <position position="309"/>
    </location>
</feature>
<feature type="modified residue" description="Pyrrolidone carboxylic acid" evidence="1">
    <location>
        <position position="20"/>
    </location>
</feature>
<feature type="disulfide bond" evidence="3">
    <location>
        <begin position="47"/>
        <end position="103"/>
    </location>
</feature>
<feature type="disulfide bond" evidence="3">
    <location>
        <begin position="156"/>
        <end position="170"/>
    </location>
</feature>
<feature type="disulfide bond" evidence="3">
    <location>
        <begin position="375"/>
        <end position="381"/>
    </location>
</feature>
<feature type="disulfide bond" evidence="4">
    <location>
        <begin position="417"/>
        <end position="440"/>
    </location>
</feature>
<feature type="disulfide bond" evidence="3">
    <location>
        <begin position="447"/>
        <end position="459"/>
    </location>
</feature>
<feature type="sequence variant" description="In strain: LBV2.">
    <original>A</original>
    <variation>G</variation>
    <location>
        <position position="57"/>
    </location>
</feature>
<feature type="sequence variant" description="In strain: LBV2, SA3 and SA4.">
    <original>S</original>
    <variation>A</variation>
    <location>
        <position position="70"/>
    </location>
</feature>
<feature type="sequence variant" description="In strain: LO4, LBV2, SA3 and SA4.">
    <original>S</original>
    <variation>T</variation>
    <location>
        <position position="148"/>
    </location>
</feature>
<feature type="sequence variant" description="In strain: LO4, LBV2, SA3 and SA4.">
    <original>P</original>
    <variation>L</variation>
    <location>
        <position position="189"/>
    </location>
</feature>
<feature type="sequence variant" description="In strain: LBV2, SA3 and SA4.">
    <original>E</original>
    <variation>D</variation>
    <location>
        <position position="198"/>
    </location>
</feature>
<feature type="sequence variant" description="In strain: LO4, LBV2, SA3 and SA4.">
    <original>A</original>
    <variation>E</variation>
    <location>
        <position position="360"/>
    </location>
</feature>
<feature type="sequence variant" description="In strain: LBV2, SA3 and SA4.">
    <original>I</original>
    <variation>V</variation>
    <location>
        <position position="365"/>
    </location>
</feature>
<feature type="sequence variant" description="In strain: SA3.">
    <original>T</original>
    <variation>A</variation>
    <location>
        <position position="401"/>
    </location>
</feature>
<feature type="sequence variant" description="In strain: LO4.">
    <original>T</original>
    <variation>M</variation>
    <location>
        <position position="401"/>
    </location>
</feature>
<reference key="1">
    <citation type="submission" date="2000-01" db="EMBL/GenBank/DDBJ databases">
        <authorList>
            <person name="Da Lage J.-L."/>
        </authorList>
    </citation>
    <scope>NUCLEOTIDE SEQUENCE [GENOMIC DNA]</scope>
</reference>
<reference key="2">
    <citation type="journal article" date="2001" name="Mol. Ecol.">
        <title>Divergence between Drosophila santomea and allopatric or sympatric populations of D. yakuba using paralogous amylase genes and migration scenarios along the Cameroon volcanic line.</title>
        <authorList>
            <person name="Cariou M.-L."/>
            <person name="Silvain J.-F."/>
            <person name="Daubin V."/>
            <person name="Da Lage J.-L."/>
            <person name="Lachaise D."/>
        </authorList>
    </citation>
    <scope>NUCLEOTIDE SEQUENCE [GENOMIC DNA]</scope>
    <source>
        <strain>LBV2</strain>
        <strain>LO4</strain>
        <strain>SA3</strain>
        <strain>SA4</strain>
    </source>
</reference>
<protein>
    <recommendedName>
        <fullName>Alpha-amylase-related protein</fullName>
        <ecNumber evidence="2">3.2.1.1</ecNumber>
    </recommendedName>
</protein>
<accession>O76264</accession>
<accession>Q9BH40</accession>
<accession>Q9BN03</accession>
<accession>Q9BN04</accession>
<accession>Q9BN05</accession>
<organism>
    <name type="scientific">Drosophila yakuba</name>
    <name type="common">Fruit fly</name>
    <dbReference type="NCBI Taxonomy" id="7245"/>
    <lineage>
        <taxon>Eukaryota</taxon>
        <taxon>Metazoa</taxon>
        <taxon>Ecdysozoa</taxon>
        <taxon>Arthropoda</taxon>
        <taxon>Hexapoda</taxon>
        <taxon>Insecta</taxon>
        <taxon>Pterygota</taxon>
        <taxon>Neoptera</taxon>
        <taxon>Endopterygota</taxon>
        <taxon>Diptera</taxon>
        <taxon>Brachycera</taxon>
        <taxon>Muscomorpha</taxon>
        <taxon>Ephydroidea</taxon>
        <taxon>Drosophilidae</taxon>
        <taxon>Drosophila</taxon>
        <taxon>Sophophora</taxon>
    </lineage>
</organism>